<dbReference type="EMBL" id="CU329670">
    <property type="protein sequence ID" value="CAB11217.1"/>
    <property type="molecule type" value="Genomic_DNA"/>
</dbReference>
<dbReference type="PIR" id="T37874">
    <property type="entry name" value="T37874"/>
</dbReference>
<dbReference type="SMR" id="O13805"/>
<dbReference type="BioGRID" id="278652">
    <property type="interactions" value="84"/>
</dbReference>
<dbReference type="FunCoup" id="O13805">
    <property type="interactions" value="119"/>
</dbReference>
<dbReference type="STRING" id="284812.O13805"/>
<dbReference type="PaxDb" id="4896-SPAC17H9.08.1"/>
<dbReference type="EnsemblFungi" id="SPAC17H9.08.1">
    <property type="protein sequence ID" value="SPAC17H9.08.1:pep"/>
    <property type="gene ID" value="SPAC17H9.08"/>
</dbReference>
<dbReference type="KEGG" id="spo:2542177"/>
<dbReference type="PomBase" id="SPAC17H9.08"/>
<dbReference type="VEuPathDB" id="FungiDB:SPAC17H9.08"/>
<dbReference type="eggNOG" id="KOG0752">
    <property type="taxonomic scope" value="Eukaryota"/>
</dbReference>
<dbReference type="HOGENOM" id="CLU_015166_10_0_1"/>
<dbReference type="InParanoid" id="O13805"/>
<dbReference type="OMA" id="VYERMKW"/>
<dbReference type="PhylomeDB" id="O13805"/>
<dbReference type="Reactome" id="R-SPO-199220">
    <property type="pathway name" value="Vitamin B5 (pantothenate) metabolism"/>
</dbReference>
<dbReference type="PRO" id="PR:O13805"/>
<dbReference type="Proteomes" id="UP000002485">
    <property type="component" value="Chromosome I"/>
</dbReference>
<dbReference type="GO" id="GO:0005743">
    <property type="term" value="C:mitochondrial inner membrane"/>
    <property type="evidence" value="ECO:0000318"/>
    <property type="project" value="GO_Central"/>
</dbReference>
<dbReference type="GO" id="GO:0015228">
    <property type="term" value="F:coenzyme A transmembrane transporter activity"/>
    <property type="evidence" value="ECO:0000318"/>
    <property type="project" value="GO_Central"/>
</dbReference>
<dbReference type="GO" id="GO:1990559">
    <property type="term" value="P:mitochondrial coenzyme A transmembrane transport"/>
    <property type="evidence" value="ECO:0000318"/>
    <property type="project" value="GO_Central"/>
</dbReference>
<dbReference type="FunFam" id="1.50.40.10:FF:000151">
    <property type="entry name" value="LEU5p Mitochondrial carrier protein"/>
    <property type="match status" value="1"/>
</dbReference>
<dbReference type="Gene3D" id="1.50.40.10">
    <property type="entry name" value="Mitochondrial carrier domain"/>
    <property type="match status" value="1"/>
</dbReference>
<dbReference type="InterPro" id="IPR002167">
    <property type="entry name" value="GDC-like"/>
</dbReference>
<dbReference type="InterPro" id="IPR002067">
    <property type="entry name" value="Mit_carrier"/>
</dbReference>
<dbReference type="InterPro" id="IPR018108">
    <property type="entry name" value="Mitochondrial_sb/sol_carrier"/>
</dbReference>
<dbReference type="InterPro" id="IPR023395">
    <property type="entry name" value="Mt_carrier_dom_sf"/>
</dbReference>
<dbReference type="PANTHER" id="PTHR24089">
    <property type="entry name" value="SOLUTE CARRIER FAMILY 25"/>
    <property type="match status" value="1"/>
</dbReference>
<dbReference type="Pfam" id="PF00153">
    <property type="entry name" value="Mito_carr"/>
    <property type="match status" value="3"/>
</dbReference>
<dbReference type="PRINTS" id="PR00928">
    <property type="entry name" value="GRAVESDC"/>
</dbReference>
<dbReference type="PRINTS" id="PR00926">
    <property type="entry name" value="MITOCARRIER"/>
</dbReference>
<dbReference type="SUPFAM" id="SSF103506">
    <property type="entry name" value="Mitochondrial carrier"/>
    <property type="match status" value="1"/>
</dbReference>
<dbReference type="PROSITE" id="PS50920">
    <property type="entry name" value="SOLCAR"/>
    <property type="match status" value="3"/>
</dbReference>
<sequence>MPNSTAQYPEKDSWEFLVKSGIAGGTAGCVAKSVVAPLDRVKILYQTNHASYRGYAYSRHGLYKAIKHIYHVYGLHGLYQGHTATLYRVFPYAGIKFVAYEQVRRVLIRDPEHETHARRFLSGSLAGTCSVFFTYPLELIRVRLAYITNTGKNPTLTQVTKDIFHERDFLCNKKYPGLSRLSKICNFYRGFSVTLTGIFPYAGMSFLAYDLATDFFHKQKIDEWVSTKKSDKKLKTWPELLCGAFAGVCGQTVSYPFEVCRRKMQIGGIRKNKSFLRLKQVVQTTYKEAGMRGFFVGLTIGYIKVIPMVSTSFFVYNHSKALLGID</sequence>
<comment type="subcellular location">
    <subcellularLocation>
        <location evidence="2">Mitochondrion inner membrane</location>
        <topology evidence="2">Multi-pass membrane protein</topology>
    </subcellularLocation>
</comment>
<comment type="similarity">
    <text evidence="2">Belongs to the mitochondrial carrier (TC 2.A.29) family.</text>
</comment>
<keyword id="KW-0472">Membrane</keyword>
<keyword id="KW-0496">Mitochondrion</keyword>
<keyword id="KW-0999">Mitochondrion inner membrane</keyword>
<keyword id="KW-1185">Reference proteome</keyword>
<keyword id="KW-0677">Repeat</keyword>
<keyword id="KW-0812">Transmembrane</keyword>
<keyword id="KW-1133">Transmembrane helix</keyword>
<keyword id="KW-0813">Transport</keyword>
<proteinExistence type="inferred from homology"/>
<evidence type="ECO:0000255" key="1"/>
<evidence type="ECO:0000305" key="2"/>
<reference key="1">
    <citation type="journal article" date="2002" name="Nature">
        <title>The genome sequence of Schizosaccharomyces pombe.</title>
        <authorList>
            <person name="Wood V."/>
            <person name="Gwilliam R."/>
            <person name="Rajandream M.A."/>
            <person name="Lyne M.H."/>
            <person name="Lyne R."/>
            <person name="Stewart A."/>
            <person name="Sgouros J.G."/>
            <person name="Peat N."/>
            <person name="Hayles J."/>
            <person name="Baker S.G."/>
            <person name="Basham D."/>
            <person name="Bowman S."/>
            <person name="Brooks K."/>
            <person name="Brown D."/>
            <person name="Brown S."/>
            <person name="Chillingworth T."/>
            <person name="Churcher C.M."/>
            <person name="Collins M."/>
            <person name="Connor R."/>
            <person name="Cronin A."/>
            <person name="Davis P."/>
            <person name="Feltwell T."/>
            <person name="Fraser A."/>
            <person name="Gentles S."/>
            <person name="Goble A."/>
            <person name="Hamlin N."/>
            <person name="Harris D.E."/>
            <person name="Hidalgo J."/>
            <person name="Hodgson G."/>
            <person name="Holroyd S."/>
            <person name="Hornsby T."/>
            <person name="Howarth S."/>
            <person name="Huckle E.J."/>
            <person name="Hunt S."/>
            <person name="Jagels K."/>
            <person name="James K.D."/>
            <person name="Jones L."/>
            <person name="Jones M."/>
            <person name="Leather S."/>
            <person name="McDonald S."/>
            <person name="McLean J."/>
            <person name="Mooney P."/>
            <person name="Moule S."/>
            <person name="Mungall K.L."/>
            <person name="Murphy L.D."/>
            <person name="Niblett D."/>
            <person name="Odell C."/>
            <person name="Oliver K."/>
            <person name="O'Neil S."/>
            <person name="Pearson D."/>
            <person name="Quail M.A."/>
            <person name="Rabbinowitsch E."/>
            <person name="Rutherford K.M."/>
            <person name="Rutter S."/>
            <person name="Saunders D."/>
            <person name="Seeger K."/>
            <person name="Sharp S."/>
            <person name="Skelton J."/>
            <person name="Simmonds M.N."/>
            <person name="Squares R."/>
            <person name="Squares S."/>
            <person name="Stevens K."/>
            <person name="Taylor K."/>
            <person name="Taylor R.G."/>
            <person name="Tivey A."/>
            <person name="Walsh S.V."/>
            <person name="Warren T."/>
            <person name="Whitehead S."/>
            <person name="Woodward J.R."/>
            <person name="Volckaert G."/>
            <person name="Aert R."/>
            <person name="Robben J."/>
            <person name="Grymonprez B."/>
            <person name="Weltjens I."/>
            <person name="Vanstreels E."/>
            <person name="Rieger M."/>
            <person name="Schaefer M."/>
            <person name="Mueller-Auer S."/>
            <person name="Gabel C."/>
            <person name="Fuchs M."/>
            <person name="Duesterhoeft A."/>
            <person name="Fritzc C."/>
            <person name="Holzer E."/>
            <person name="Moestl D."/>
            <person name="Hilbert H."/>
            <person name="Borzym K."/>
            <person name="Langer I."/>
            <person name="Beck A."/>
            <person name="Lehrach H."/>
            <person name="Reinhardt R."/>
            <person name="Pohl T.M."/>
            <person name="Eger P."/>
            <person name="Zimmermann W."/>
            <person name="Wedler H."/>
            <person name="Wambutt R."/>
            <person name="Purnelle B."/>
            <person name="Goffeau A."/>
            <person name="Cadieu E."/>
            <person name="Dreano S."/>
            <person name="Gloux S."/>
            <person name="Lelaure V."/>
            <person name="Mottier S."/>
            <person name="Galibert F."/>
            <person name="Aves S.J."/>
            <person name="Xiang Z."/>
            <person name="Hunt C."/>
            <person name="Moore K."/>
            <person name="Hurst S.M."/>
            <person name="Lucas M."/>
            <person name="Rochet M."/>
            <person name="Gaillardin C."/>
            <person name="Tallada V.A."/>
            <person name="Garzon A."/>
            <person name="Thode G."/>
            <person name="Daga R.R."/>
            <person name="Cruzado L."/>
            <person name="Jimenez J."/>
            <person name="Sanchez M."/>
            <person name="del Rey F."/>
            <person name="Benito J."/>
            <person name="Dominguez A."/>
            <person name="Revuelta J.L."/>
            <person name="Moreno S."/>
            <person name="Armstrong J."/>
            <person name="Forsburg S.L."/>
            <person name="Cerutti L."/>
            <person name="Lowe T."/>
            <person name="McCombie W.R."/>
            <person name="Paulsen I."/>
            <person name="Potashkin J."/>
            <person name="Shpakovski G.V."/>
            <person name="Ussery D."/>
            <person name="Barrell B.G."/>
            <person name="Nurse P."/>
        </authorList>
    </citation>
    <scope>NUCLEOTIDE SEQUENCE [LARGE SCALE GENOMIC DNA]</scope>
    <source>
        <strain>972 / ATCC 24843</strain>
    </source>
</reference>
<name>YE08_SCHPO</name>
<feature type="chain" id="PRO_0000090703" description="Uncharacterized mitochondrial carrier C17H9.08">
    <location>
        <begin position="1"/>
        <end position="326"/>
    </location>
</feature>
<feature type="transmembrane region" description="Helical; Name=1" evidence="1">
    <location>
        <begin position="16"/>
        <end position="36"/>
    </location>
</feature>
<feature type="transmembrane region" description="Helical; Name=2" evidence="1">
    <location>
        <begin position="83"/>
        <end position="103"/>
    </location>
</feature>
<feature type="transmembrane region" description="Helical; Name=3" evidence="1">
    <location>
        <begin position="120"/>
        <end position="140"/>
    </location>
</feature>
<feature type="transmembrane region" description="Helical; Name=4" evidence="1">
    <location>
        <begin position="191"/>
        <end position="211"/>
    </location>
</feature>
<feature type="transmembrane region" description="Helical; Name=5" evidence="1">
    <location>
        <begin position="240"/>
        <end position="260"/>
    </location>
</feature>
<feature type="transmembrane region" description="Helical; Name=6" evidence="1">
    <location>
        <begin position="294"/>
        <end position="314"/>
    </location>
</feature>
<feature type="repeat" description="Solcar 1">
    <location>
        <begin position="15"/>
        <end position="106"/>
    </location>
</feature>
<feature type="repeat" description="Solcar 2">
    <location>
        <begin position="114"/>
        <end position="215"/>
    </location>
</feature>
<feature type="repeat" description="Solcar 3">
    <location>
        <begin position="234"/>
        <end position="322"/>
    </location>
</feature>
<gene>
    <name type="ORF">SPAC17H9.08</name>
</gene>
<accession>O13805</accession>
<organism>
    <name type="scientific">Schizosaccharomyces pombe (strain 972 / ATCC 24843)</name>
    <name type="common">Fission yeast</name>
    <dbReference type="NCBI Taxonomy" id="284812"/>
    <lineage>
        <taxon>Eukaryota</taxon>
        <taxon>Fungi</taxon>
        <taxon>Dikarya</taxon>
        <taxon>Ascomycota</taxon>
        <taxon>Taphrinomycotina</taxon>
        <taxon>Schizosaccharomycetes</taxon>
        <taxon>Schizosaccharomycetales</taxon>
        <taxon>Schizosaccharomycetaceae</taxon>
        <taxon>Schizosaccharomyces</taxon>
    </lineage>
</organism>
<protein>
    <recommendedName>
        <fullName>Uncharacterized mitochondrial carrier C17H9.08</fullName>
    </recommendedName>
</protein>